<keyword id="KW-0479">Metal-binding</keyword>
<keyword id="KW-0687">Ribonucleoprotein</keyword>
<keyword id="KW-0689">Ribosomal protein</keyword>
<keyword id="KW-0862">Zinc</keyword>
<keyword id="KW-0863">Zinc-finger</keyword>
<gene>
    <name evidence="1" type="primary">rps27e</name>
    <name type="ordered locus">PH1939.1</name>
</gene>
<reference key="1">
    <citation type="journal article" date="1998" name="DNA Res.">
        <title>Complete sequence and gene organization of the genome of a hyper-thermophilic archaebacterium, Pyrococcus horikoshii OT3.</title>
        <authorList>
            <person name="Kawarabayasi Y."/>
            <person name="Sawada M."/>
            <person name="Horikawa H."/>
            <person name="Haikawa Y."/>
            <person name="Hino Y."/>
            <person name="Yamamoto S."/>
            <person name="Sekine M."/>
            <person name="Baba S."/>
            <person name="Kosugi H."/>
            <person name="Hosoyama A."/>
            <person name="Nagai Y."/>
            <person name="Sakai M."/>
            <person name="Ogura K."/>
            <person name="Otsuka R."/>
            <person name="Nakazawa H."/>
            <person name="Takamiya M."/>
            <person name="Ohfuku Y."/>
            <person name="Funahashi T."/>
            <person name="Tanaka T."/>
            <person name="Kudoh Y."/>
            <person name="Yamazaki J."/>
            <person name="Kushida N."/>
            <person name="Oguchi A."/>
            <person name="Aoki K."/>
            <person name="Yoshizawa T."/>
            <person name="Nakamura Y."/>
            <person name="Robb F.T."/>
            <person name="Horikoshi K."/>
            <person name="Masuchi Y."/>
            <person name="Shizuya H."/>
            <person name="Kikuchi H."/>
        </authorList>
    </citation>
    <scope>NUCLEOTIDE SEQUENCE [LARGE SCALE GENOMIC DNA]</scope>
    <source>
        <strain>ATCC 700860 / DSM 12428 / JCM 9974 / NBRC 100139 / OT-3</strain>
    </source>
</reference>
<reference key="2">
    <citation type="unpublished observations" date="2001-05">
        <authorList>
            <person name="Medigue C."/>
            <person name="Bocs S."/>
        </authorList>
    </citation>
    <scope>IDENTIFICATION</scope>
</reference>
<comment type="cofactor">
    <cofactor evidence="1">
        <name>Zn(2+)</name>
        <dbReference type="ChEBI" id="CHEBI:29105"/>
    </cofactor>
    <text evidence="1">Binds 1 zinc ion per subunit.</text>
</comment>
<comment type="subunit">
    <text evidence="1">Part of the 30S ribosomal subunit.</text>
</comment>
<comment type="similarity">
    <text evidence="1">Belongs to the eukaryotic ribosomal protein eS27 family.</text>
</comment>
<organism>
    <name type="scientific">Pyrococcus horikoshii (strain ATCC 700860 / DSM 12428 / JCM 9974 / NBRC 100139 / OT-3)</name>
    <dbReference type="NCBI Taxonomy" id="70601"/>
    <lineage>
        <taxon>Archaea</taxon>
        <taxon>Methanobacteriati</taxon>
        <taxon>Methanobacteriota</taxon>
        <taxon>Thermococci</taxon>
        <taxon>Thermococcales</taxon>
        <taxon>Thermococcaceae</taxon>
        <taxon>Pyrococcus</taxon>
    </lineage>
</organism>
<proteinExistence type="inferred from homology"/>
<accession>P58078</accession>
<evidence type="ECO:0000255" key="1">
    <source>
        <dbReference type="HAMAP-Rule" id="MF_00371"/>
    </source>
</evidence>
<dbReference type="EMBL" id="BA000001">
    <property type="status" value="NOT_ANNOTATED_CDS"/>
    <property type="molecule type" value="Genomic_DNA"/>
</dbReference>
<dbReference type="RefSeq" id="WP_010886006.1">
    <property type="nucleotide sequence ID" value="NC_000961.1"/>
</dbReference>
<dbReference type="SMR" id="P58078"/>
<dbReference type="GeneID" id="1442788"/>
<dbReference type="OrthoDB" id="5718at2157"/>
<dbReference type="Proteomes" id="UP000000752">
    <property type="component" value="Chromosome"/>
</dbReference>
<dbReference type="GO" id="GO:1990904">
    <property type="term" value="C:ribonucleoprotein complex"/>
    <property type="evidence" value="ECO:0007669"/>
    <property type="project" value="UniProtKB-KW"/>
</dbReference>
<dbReference type="GO" id="GO:0005840">
    <property type="term" value="C:ribosome"/>
    <property type="evidence" value="ECO:0007669"/>
    <property type="project" value="UniProtKB-KW"/>
</dbReference>
<dbReference type="GO" id="GO:0003735">
    <property type="term" value="F:structural constituent of ribosome"/>
    <property type="evidence" value="ECO:0007669"/>
    <property type="project" value="InterPro"/>
</dbReference>
<dbReference type="GO" id="GO:0008270">
    <property type="term" value="F:zinc ion binding"/>
    <property type="evidence" value="ECO:0007669"/>
    <property type="project" value="UniProtKB-UniRule"/>
</dbReference>
<dbReference type="GO" id="GO:0006412">
    <property type="term" value="P:translation"/>
    <property type="evidence" value="ECO:0007669"/>
    <property type="project" value="UniProtKB-UniRule"/>
</dbReference>
<dbReference type="FunFam" id="2.20.25.100:FF:000002">
    <property type="entry name" value="30S ribosomal protein S27e"/>
    <property type="match status" value="1"/>
</dbReference>
<dbReference type="Gene3D" id="2.20.25.100">
    <property type="entry name" value="Zn-binding ribosomal proteins"/>
    <property type="match status" value="1"/>
</dbReference>
<dbReference type="HAMAP" id="MF_00371">
    <property type="entry name" value="Ribosomal_eS27"/>
    <property type="match status" value="1"/>
</dbReference>
<dbReference type="InterPro" id="IPR000592">
    <property type="entry name" value="Ribosomal_eS27"/>
</dbReference>
<dbReference type="InterPro" id="IPR023407">
    <property type="entry name" value="Ribosomal_eS27_Zn-bd_dom_sf"/>
</dbReference>
<dbReference type="InterPro" id="IPR011332">
    <property type="entry name" value="Ribosomal_zn-bd"/>
</dbReference>
<dbReference type="NCBIfam" id="NF001629">
    <property type="entry name" value="PRK00415.1"/>
    <property type="match status" value="1"/>
</dbReference>
<dbReference type="Pfam" id="PF01667">
    <property type="entry name" value="Ribosomal_S27e"/>
    <property type="match status" value="1"/>
</dbReference>
<dbReference type="SUPFAM" id="SSF57829">
    <property type="entry name" value="Zn-binding ribosomal proteins"/>
    <property type="match status" value="1"/>
</dbReference>
<dbReference type="PROSITE" id="PS01168">
    <property type="entry name" value="RIBOSOMAL_S27E"/>
    <property type="match status" value="1"/>
</dbReference>
<name>RS27_PYRHO</name>
<feature type="chain" id="PRO_0000149079" description="Small ribosomal subunit protein eS27">
    <location>
        <begin position="1"/>
        <end position="65"/>
    </location>
</feature>
<feature type="zinc finger region" description="C4-type" evidence="1">
    <location>
        <begin position="20"/>
        <end position="42"/>
    </location>
</feature>
<feature type="binding site" evidence="1">
    <location>
        <position position="20"/>
    </location>
    <ligand>
        <name>Zn(2+)</name>
        <dbReference type="ChEBI" id="CHEBI:29105"/>
    </ligand>
</feature>
<feature type="binding site" evidence="1">
    <location>
        <position position="23"/>
    </location>
    <ligand>
        <name>Zn(2+)</name>
        <dbReference type="ChEBI" id="CHEBI:29105"/>
    </ligand>
</feature>
<feature type="binding site" evidence="1">
    <location>
        <position position="39"/>
    </location>
    <ligand>
        <name>Zn(2+)</name>
        <dbReference type="ChEBI" id="CHEBI:29105"/>
    </ligand>
</feature>
<feature type="binding site" evidence="1">
    <location>
        <position position="42"/>
    </location>
    <ligand>
        <name>Zn(2+)</name>
        <dbReference type="ChEBI" id="CHEBI:29105"/>
    </ligand>
</feature>
<sequence>MSLPRNVIPMPRSRFLRVKCIDCGNEQIVFSHPATRVRCLVCGATLVEPTGGKGIVKAKILEVLE</sequence>
<protein>
    <recommendedName>
        <fullName evidence="1">Small ribosomal subunit protein eS27</fullName>
    </recommendedName>
</protein>